<reference key="1">
    <citation type="journal article" date="2006" name="J. Bacteriol.">
        <title>Complete genome sequence of Yersinia pestis strains Antiqua and Nepal516: evidence of gene reduction in an emerging pathogen.</title>
        <authorList>
            <person name="Chain P.S.G."/>
            <person name="Hu P."/>
            <person name="Malfatti S.A."/>
            <person name="Radnedge L."/>
            <person name="Larimer F."/>
            <person name="Vergez L.M."/>
            <person name="Worsham P."/>
            <person name="Chu M.C."/>
            <person name="Andersen G.L."/>
        </authorList>
    </citation>
    <scope>NUCLEOTIDE SEQUENCE [LARGE SCALE GENOMIC DNA]</scope>
    <source>
        <strain>Antiqua</strain>
    </source>
</reference>
<protein>
    <recommendedName>
        <fullName evidence="1">Phosphoglycerate kinase</fullName>
        <ecNumber evidence="1">2.7.2.3</ecNumber>
    </recommendedName>
</protein>
<gene>
    <name evidence="1" type="primary">pgk</name>
    <name type="ordered locus">YPA_0343</name>
</gene>
<sequence length="387" mass="41074">MSVIKMTDLDLAGKRVLIRADLNVPVKEGKVTSDARIRASLPTIEAALKQGAKVMVTSHLGRPTEGEYNEEFSLLPVVNYLKEKLSSPVRLAKDYLDGVEIAAGELVVLENVRFNKGEKKDDEALSKKYAALCDVYVMDAFGTAHRAQASTHGVGKFAPIACAGPLLSAELEALGKALGNPARPMVAIVGGSKVSTKLTVLGALSKIADKLIVGGGIANTFVAAQGHNVGKSLYEADLIPEAKRLLETCDIPVPTDVRVATEFSETAAATLKPANEIKDDEQILDLGDESAERLAEILKNAKTILWNGPVGVFEFPNFRKGTEIVARAIAESEAFSIAGGGDTLAAIDLFGIADQISYISTGGGAFLEFVEGKKLPAVVMLEERAKQ</sequence>
<accession>Q1CB61</accession>
<keyword id="KW-0067">ATP-binding</keyword>
<keyword id="KW-0963">Cytoplasm</keyword>
<keyword id="KW-0324">Glycolysis</keyword>
<keyword id="KW-0418">Kinase</keyword>
<keyword id="KW-0547">Nucleotide-binding</keyword>
<keyword id="KW-0808">Transferase</keyword>
<dbReference type="EC" id="2.7.2.3" evidence="1"/>
<dbReference type="EMBL" id="CP000308">
    <property type="protein sequence ID" value="ABG12311.1"/>
    <property type="molecule type" value="Genomic_DNA"/>
</dbReference>
<dbReference type="RefSeq" id="WP_002209963.1">
    <property type="nucleotide sequence ID" value="NZ_CP009906.1"/>
</dbReference>
<dbReference type="SMR" id="Q1CB61"/>
<dbReference type="GeneID" id="57973719"/>
<dbReference type="KEGG" id="ypa:YPA_0343"/>
<dbReference type="UniPathway" id="UPA00109">
    <property type="reaction ID" value="UER00185"/>
</dbReference>
<dbReference type="Proteomes" id="UP000001971">
    <property type="component" value="Chromosome"/>
</dbReference>
<dbReference type="GO" id="GO:0005829">
    <property type="term" value="C:cytosol"/>
    <property type="evidence" value="ECO:0007669"/>
    <property type="project" value="TreeGrafter"/>
</dbReference>
<dbReference type="GO" id="GO:0043531">
    <property type="term" value="F:ADP binding"/>
    <property type="evidence" value="ECO:0007669"/>
    <property type="project" value="TreeGrafter"/>
</dbReference>
<dbReference type="GO" id="GO:0005524">
    <property type="term" value="F:ATP binding"/>
    <property type="evidence" value="ECO:0007669"/>
    <property type="project" value="UniProtKB-KW"/>
</dbReference>
<dbReference type="GO" id="GO:0004618">
    <property type="term" value="F:phosphoglycerate kinase activity"/>
    <property type="evidence" value="ECO:0007669"/>
    <property type="project" value="UniProtKB-UniRule"/>
</dbReference>
<dbReference type="GO" id="GO:0006094">
    <property type="term" value="P:gluconeogenesis"/>
    <property type="evidence" value="ECO:0007669"/>
    <property type="project" value="TreeGrafter"/>
</dbReference>
<dbReference type="GO" id="GO:0006096">
    <property type="term" value="P:glycolytic process"/>
    <property type="evidence" value="ECO:0007669"/>
    <property type="project" value="UniProtKB-UniRule"/>
</dbReference>
<dbReference type="FunFam" id="3.40.50.1260:FF:000001">
    <property type="entry name" value="Phosphoglycerate kinase"/>
    <property type="match status" value="1"/>
</dbReference>
<dbReference type="FunFam" id="3.40.50.1260:FF:000002">
    <property type="entry name" value="Phosphoglycerate kinase"/>
    <property type="match status" value="1"/>
</dbReference>
<dbReference type="Gene3D" id="3.40.50.1260">
    <property type="entry name" value="Phosphoglycerate kinase, N-terminal domain"/>
    <property type="match status" value="2"/>
</dbReference>
<dbReference type="HAMAP" id="MF_00145">
    <property type="entry name" value="Phosphoglyc_kinase"/>
    <property type="match status" value="1"/>
</dbReference>
<dbReference type="InterPro" id="IPR001576">
    <property type="entry name" value="Phosphoglycerate_kinase"/>
</dbReference>
<dbReference type="InterPro" id="IPR015911">
    <property type="entry name" value="Phosphoglycerate_kinase_CS"/>
</dbReference>
<dbReference type="InterPro" id="IPR015824">
    <property type="entry name" value="Phosphoglycerate_kinase_N"/>
</dbReference>
<dbReference type="InterPro" id="IPR036043">
    <property type="entry name" value="Phosphoglycerate_kinase_sf"/>
</dbReference>
<dbReference type="PANTHER" id="PTHR11406">
    <property type="entry name" value="PHOSPHOGLYCERATE KINASE"/>
    <property type="match status" value="1"/>
</dbReference>
<dbReference type="PANTHER" id="PTHR11406:SF23">
    <property type="entry name" value="PHOSPHOGLYCERATE KINASE 1, CHLOROPLASTIC-RELATED"/>
    <property type="match status" value="1"/>
</dbReference>
<dbReference type="Pfam" id="PF00162">
    <property type="entry name" value="PGK"/>
    <property type="match status" value="1"/>
</dbReference>
<dbReference type="PIRSF" id="PIRSF000724">
    <property type="entry name" value="Pgk"/>
    <property type="match status" value="1"/>
</dbReference>
<dbReference type="PRINTS" id="PR00477">
    <property type="entry name" value="PHGLYCKINASE"/>
</dbReference>
<dbReference type="SUPFAM" id="SSF53748">
    <property type="entry name" value="Phosphoglycerate kinase"/>
    <property type="match status" value="1"/>
</dbReference>
<dbReference type="PROSITE" id="PS00111">
    <property type="entry name" value="PGLYCERATE_KINASE"/>
    <property type="match status" value="1"/>
</dbReference>
<comment type="catalytic activity">
    <reaction evidence="1">
        <text>(2R)-3-phosphoglycerate + ATP = (2R)-3-phospho-glyceroyl phosphate + ADP</text>
        <dbReference type="Rhea" id="RHEA:14801"/>
        <dbReference type="ChEBI" id="CHEBI:30616"/>
        <dbReference type="ChEBI" id="CHEBI:57604"/>
        <dbReference type="ChEBI" id="CHEBI:58272"/>
        <dbReference type="ChEBI" id="CHEBI:456216"/>
        <dbReference type="EC" id="2.7.2.3"/>
    </reaction>
</comment>
<comment type="pathway">
    <text evidence="1">Carbohydrate degradation; glycolysis; pyruvate from D-glyceraldehyde 3-phosphate: step 2/5.</text>
</comment>
<comment type="subunit">
    <text evidence="1">Monomer.</text>
</comment>
<comment type="subcellular location">
    <subcellularLocation>
        <location evidence="1">Cytoplasm</location>
    </subcellularLocation>
</comment>
<comment type="similarity">
    <text evidence="1">Belongs to the phosphoglycerate kinase family.</text>
</comment>
<feature type="chain" id="PRO_1000058097" description="Phosphoglycerate kinase">
    <location>
        <begin position="1"/>
        <end position="387"/>
    </location>
</feature>
<feature type="binding site" evidence="1">
    <location>
        <begin position="21"/>
        <end position="23"/>
    </location>
    <ligand>
        <name>substrate</name>
    </ligand>
</feature>
<feature type="binding site" evidence="1">
    <location>
        <position position="36"/>
    </location>
    <ligand>
        <name>substrate</name>
    </ligand>
</feature>
<feature type="binding site" evidence="1">
    <location>
        <begin position="59"/>
        <end position="62"/>
    </location>
    <ligand>
        <name>substrate</name>
    </ligand>
</feature>
<feature type="binding site" evidence="1">
    <location>
        <position position="113"/>
    </location>
    <ligand>
        <name>substrate</name>
    </ligand>
</feature>
<feature type="binding site" evidence="1">
    <location>
        <position position="146"/>
    </location>
    <ligand>
        <name>substrate</name>
    </ligand>
</feature>
<feature type="binding site" evidence="1">
    <location>
        <position position="197"/>
    </location>
    <ligand>
        <name>ATP</name>
        <dbReference type="ChEBI" id="CHEBI:30616"/>
    </ligand>
</feature>
<feature type="binding site" evidence="1">
    <location>
        <position position="314"/>
    </location>
    <ligand>
        <name>ATP</name>
        <dbReference type="ChEBI" id="CHEBI:30616"/>
    </ligand>
</feature>
<feature type="binding site" evidence="1">
    <location>
        <begin position="340"/>
        <end position="343"/>
    </location>
    <ligand>
        <name>ATP</name>
        <dbReference type="ChEBI" id="CHEBI:30616"/>
    </ligand>
</feature>
<name>PGK_YERPA</name>
<evidence type="ECO:0000255" key="1">
    <source>
        <dbReference type="HAMAP-Rule" id="MF_00145"/>
    </source>
</evidence>
<proteinExistence type="inferred from homology"/>
<organism>
    <name type="scientific">Yersinia pestis bv. Antiqua (strain Antiqua)</name>
    <dbReference type="NCBI Taxonomy" id="360102"/>
    <lineage>
        <taxon>Bacteria</taxon>
        <taxon>Pseudomonadati</taxon>
        <taxon>Pseudomonadota</taxon>
        <taxon>Gammaproteobacteria</taxon>
        <taxon>Enterobacterales</taxon>
        <taxon>Yersiniaceae</taxon>
        <taxon>Yersinia</taxon>
    </lineage>
</organism>